<keyword id="KW-0010">Activator</keyword>
<keyword id="KW-0156">Chromatin regulator</keyword>
<keyword id="KW-0963">Cytoplasm</keyword>
<keyword id="KW-0479">Metal-binding</keyword>
<keyword id="KW-0509">mRNA transport</keyword>
<keyword id="KW-0539">Nucleus</keyword>
<keyword id="KW-0597">Phosphoprotein</keyword>
<keyword id="KW-0653">Protein transport</keyword>
<keyword id="KW-1185">Reference proteome</keyword>
<keyword id="KW-0804">Transcription</keyword>
<keyword id="KW-0805">Transcription regulation</keyword>
<keyword id="KW-0811">Translocation</keyword>
<keyword id="KW-0813">Transport</keyword>
<keyword id="KW-0862">Zinc</keyword>
<keyword id="KW-0863">Zinc-finger</keyword>
<evidence type="ECO:0000250" key="1"/>
<evidence type="ECO:0000255" key="2">
    <source>
        <dbReference type="HAMAP-Rule" id="MF_03047"/>
    </source>
</evidence>
<evidence type="ECO:0000256" key="3">
    <source>
        <dbReference type="SAM" id="MobiDB-lite"/>
    </source>
</evidence>
<accession>B4GZZ4</accession>
<proteinExistence type="inferred from homology"/>
<dbReference type="EMBL" id="CH479199">
    <property type="protein sequence ID" value="EDW29571.1"/>
    <property type="molecule type" value="Genomic_DNA"/>
</dbReference>
<dbReference type="RefSeq" id="XP_002024173.1">
    <property type="nucleotide sequence ID" value="XM_002024137.1"/>
</dbReference>
<dbReference type="SMR" id="B4GZZ4"/>
<dbReference type="STRING" id="7234.B4GZZ4"/>
<dbReference type="EnsemblMetazoa" id="FBtr0188307">
    <property type="protein sequence ID" value="FBpp0186799"/>
    <property type="gene ID" value="FBgn0160283"/>
</dbReference>
<dbReference type="EnsemblMetazoa" id="XM_002024137.2">
    <property type="protein sequence ID" value="XP_002024173.2"/>
    <property type="gene ID" value="LOC6599057"/>
</dbReference>
<dbReference type="GeneID" id="6599057"/>
<dbReference type="KEGG" id="dpe:6599057"/>
<dbReference type="CTD" id="40035"/>
<dbReference type="eggNOG" id="KOG2612">
    <property type="taxonomic scope" value="Eukaryota"/>
</dbReference>
<dbReference type="HOGENOM" id="CLU_100743_0_0_1"/>
<dbReference type="OMA" id="RMCEMPN"/>
<dbReference type="OrthoDB" id="21557at2759"/>
<dbReference type="PhylomeDB" id="B4GZZ4"/>
<dbReference type="Proteomes" id="UP000008744">
    <property type="component" value="Unassembled WGS sequence"/>
</dbReference>
<dbReference type="GO" id="GO:0005737">
    <property type="term" value="C:cytoplasm"/>
    <property type="evidence" value="ECO:0007669"/>
    <property type="project" value="UniProtKB-SubCell"/>
</dbReference>
<dbReference type="GO" id="GO:0071819">
    <property type="term" value="C:DUBm complex"/>
    <property type="evidence" value="ECO:0007669"/>
    <property type="project" value="UniProtKB-UniRule"/>
</dbReference>
<dbReference type="GO" id="GO:0005643">
    <property type="term" value="C:nuclear pore"/>
    <property type="evidence" value="ECO:0007669"/>
    <property type="project" value="UniProtKB-UniRule"/>
</dbReference>
<dbReference type="GO" id="GO:0005654">
    <property type="term" value="C:nucleoplasm"/>
    <property type="evidence" value="ECO:0007669"/>
    <property type="project" value="UniProtKB-SubCell"/>
</dbReference>
<dbReference type="GO" id="GO:0000124">
    <property type="term" value="C:SAGA complex"/>
    <property type="evidence" value="ECO:0000250"/>
    <property type="project" value="UniProtKB"/>
</dbReference>
<dbReference type="GO" id="GO:0003713">
    <property type="term" value="F:transcription coactivator activity"/>
    <property type="evidence" value="ECO:0007669"/>
    <property type="project" value="UniProtKB-UniRule"/>
</dbReference>
<dbReference type="GO" id="GO:0008270">
    <property type="term" value="F:zinc ion binding"/>
    <property type="evidence" value="ECO:0007669"/>
    <property type="project" value="UniProtKB-UniRule"/>
</dbReference>
<dbReference type="GO" id="GO:0006325">
    <property type="term" value="P:chromatin organization"/>
    <property type="evidence" value="ECO:0000250"/>
    <property type="project" value="UniProtKB"/>
</dbReference>
<dbReference type="GO" id="GO:0006406">
    <property type="term" value="P:mRNA export from nucleus"/>
    <property type="evidence" value="ECO:0007669"/>
    <property type="project" value="UniProtKB-UniRule"/>
</dbReference>
<dbReference type="GO" id="GO:0045893">
    <property type="term" value="P:positive regulation of DNA-templated transcription"/>
    <property type="evidence" value="ECO:0000250"/>
    <property type="project" value="UniProtKB"/>
</dbReference>
<dbReference type="GO" id="GO:0015031">
    <property type="term" value="P:protein transport"/>
    <property type="evidence" value="ECO:0007669"/>
    <property type="project" value="UniProtKB-KW"/>
</dbReference>
<dbReference type="GO" id="GO:0006357">
    <property type="term" value="P:regulation of transcription by RNA polymerase II"/>
    <property type="evidence" value="ECO:0007669"/>
    <property type="project" value="TreeGrafter"/>
</dbReference>
<dbReference type="FunFam" id="3.30.160.60:FF:000118">
    <property type="entry name" value="Ataxin-7-like protein 3"/>
    <property type="match status" value="1"/>
</dbReference>
<dbReference type="Gene3D" id="3.30.160.60">
    <property type="entry name" value="Classic Zinc Finger"/>
    <property type="match status" value="1"/>
</dbReference>
<dbReference type="HAMAP" id="MF_03047">
    <property type="entry name" value="Sgf11"/>
    <property type="match status" value="1"/>
</dbReference>
<dbReference type="InterPro" id="IPR013246">
    <property type="entry name" value="SAGA_su_Sgf11"/>
</dbReference>
<dbReference type="InterPro" id="IPR051078">
    <property type="entry name" value="SGF11"/>
</dbReference>
<dbReference type="PANTHER" id="PTHR46367">
    <property type="entry name" value="ATAXIN-7-LIKE PROTEIN 3"/>
    <property type="match status" value="1"/>
</dbReference>
<dbReference type="PANTHER" id="PTHR46367:SF1">
    <property type="entry name" value="ATAXIN-7-LIKE PROTEIN 3"/>
    <property type="match status" value="1"/>
</dbReference>
<dbReference type="Pfam" id="PF08209">
    <property type="entry name" value="Sgf11"/>
    <property type="match status" value="1"/>
</dbReference>
<sequence length="196" mass="21047">MPTSAAPVPAVAAQSPTTRKAIANNFRELTKDPKKLDEAANQLYESLLEDAVTGIFIEVHHLRKIGNLSALDGVAEESAHRICDVPNLDIFGVSTAKKAIDCTCPNCDRLVAAARFAPHLEKCMGMGRISSRIASRRLATKEGTSASSNSSYVHSGANAGGTDDEDDVDWSSDKRKKKSTQNSRNNGSKKNNGKTF</sequence>
<feature type="chain" id="PRO_0000367527" description="SAGA-associated factor 11 homolog">
    <location>
        <begin position="1"/>
        <end position="196"/>
    </location>
</feature>
<feature type="zinc finger region" description="SGF11-type" evidence="2">
    <location>
        <begin position="102"/>
        <end position="123"/>
    </location>
</feature>
<feature type="region of interest" description="Disordered" evidence="3">
    <location>
        <begin position="140"/>
        <end position="196"/>
    </location>
</feature>
<feature type="compositionally biased region" description="Polar residues" evidence="3">
    <location>
        <begin position="142"/>
        <end position="153"/>
    </location>
</feature>
<feature type="compositionally biased region" description="Low complexity" evidence="3">
    <location>
        <begin position="182"/>
        <end position="196"/>
    </location>
</feature>
<feature type="modified residue" description="Phosphoserine" evidence="1">
    <location>
        <position position="172"/>
    </location>
</feature>
<protein>
    <recommendedName>
        <fullName evidence="2">SAGA-associated factor 11 homolog</fullName>
    </recommendedName>
</protein>
<gene>
    <name evidence="2" type="primary">Sgf11</name>
    <name type="ORF">GL22692</name>
</gene>
<name>SGF11_DROPE</name>
<comment type="function">
    <text evidence="2">Component of the transcription regulatory histone acetylation (HAT) complex SAGA, a multiprotein complex that activates transcription by remodeling chromatin and mediating histone acetylation and deubiquitination. Within the SAGA complex, participates in a subcomplex that specifically deubiquitinates histone H2B. The SAGA complex is recruited to specific gene promoters by activators, where it is required for transcription. Required for nuclear receptor-mediated transactivation. Binds independently on SAGA to promoters in an RNA-dependent manner. Binds to mRNA and is essential for total mRNA export from the nucleus. Required to counteract heterochromatin silencing. Controls the development of neuronal connectivity in visual system by being required for accurate axon targeting in the optic lobe. Required for expression of ecdysone-induced genes such as br/broad.</text>
</comment>
<comment type="subunit">
    <text evidence="2">Component of some SAGA transcription coactivator-HAT complexes, at least composed of Ada2b, not/nonstop, Pcaf/Gcn5, Sgf11 and Spt3. Within the SAGA complex, Sgf11, e(y)2, and not/nonstop form an additional subcomplex of SAGA called the DUB module (deubiquitination module). Interacts directly with not/nonstop. Interacts with the AMEX complex component xmas-2. Interacts with Cbp80; important for promoter recruitment of Sgf11 that is not associated with the DUB module.</text>
</comment>
<comment type="subcellular location">
    <subcellularLocation>
        <location evidence="2">Nucleus</location>
        <location evidence="2">Nucleoplasm</location>
    </subcellularLocation>
    <subcellularLocation>
        <location evidence="2">Cytoplasm</location>
    </subcellularLocation>
    <text evidence="2">Localizes to nuclear periphery, in contact with the nuclear pore complex (NPC).</text>
</comment>
<comment type="domain">
    <text evidence="2">The long N-terminal helix forms part of the 'assembly lobe' of the SAGA deubiquitination module.</text>
</comment>
<comment type="domain">
    <text evidence="2">The C-terminal SGF11-type zinc-finger domain together with the C-terminal catalytic domain of not/nonstop forms the 'catalytic lobe' of the SAGA deubiquitination module.</text>
</comment>
<comment type="similarity">
    <text evidence="2">Belongs to the SGF11 family.</text>
</comment>
<organism>
    <name type="scientific">Drosophila persimilis</name>
    <name type="common">Fruit fly</name>
    <dbReference type="NCBI Taxonomy" id="7234"/>
    <lineage>
        <taxon>Eukaryota</taxon>
        <taxon>Metazoa</taxon>
        <taxon>Ecdysozoa</taxon>
        <taxon>Arthropoda</taxon>
        <taxon>Hexapoda</taxon>
        <taxon>Insecta</taxon>
        <taxon>Pterygota</taxon>
        <taxon>Neoptera</taxon>
        <taxon>Endopterygota</taxon>
        <taxon>Diptera</taxon>
        <taxon>Brachycera</taxon>
        <taxon>Muscomorpha</taxon>
        <taxon>Ephydroidea</taxon>
        <taxon>Drosophilidae</taxon>
        <taxon>Drosophila</taxon>
        <taxon>Sophophora</taxon>
    </lineage>
</organism>
<reference key="1">
    <citation type="journal article" date="2007" name="Nature">
        <title>Evolution of genes and genomes on the Drosophila phylogeny.</title>
        <authorList>
            <consortium name="Drosophila 12 genomes consortium"/>
        </authorList>
    </citation>
    <scope>NUCLEOTIDE SEQUENCE [LARGE SCALE GENOMIC DNA]</scope>
    <source>
        <strain>MSH-3 / Tucson 14011-0111.49</strain>
    </source>
</reference>